<accession>Q8NYY7</accession>
<keyword id="KW-0963">Cytoplasm</keyword>
<keyword id="KW-0489">Methyltransferase</keyword>
<keyword id="KW-0698">rRNA processing</keyword>
<keyword id="KW-0949">S-adenosyl-L-methionine</keyword>
<keyword id="KW-0808">Transferase</keyword>
<organism>
    <name type="scientific">Streptococcus pyogenes serotype M18 (strain MGAS8232)</name>
    <dbReference type="NCBI Taxonomy" id="186103"/>
    <lineage>
        <taxon>Bacteria</taxon>
        <taxon>Bacillati</taxon>
        <taxon>Bacillota</taxon>
        <taxon>Bacilli</taxon>
        <taxon>Lactobacillales</taxon>
        <taxon>Streptococcaceae</taxon>
        <taxon>Streptococcus</taxon>
    </lineage>
</organism>
<feature type="chain" id="PRO_0000198195" description="Ribosomal RNA large subunit methyltransferase H">
    <location>
        <begin position="1"/>
        <end position="159"/>
    </location>
</feature>
<feature type="binding site" evidence="1">
    <location>
        <position position="76"/>
    </location>
    <ligand>
        <name>S-adenosyl-L-methionine</name>
        <dbReference type="ChEBI" id="CHEBI:59789"/>
    </ligand>
</feature>
<feature type="binding site" evidence="1">
    <location>
        <position position="108"/>
    </location>
    <ligand>
        <name>S-adenosyl-L-methionine</name>
        <dbReference type="ChEBI" id="CHEBI:59789"/>
    </ligand>
</feature>
<feature type="binding site" evidence="1">
    <location>
        <begin position="127"/>
        <end position="132"/>
    </location>
    <ligand>
        <name>S-adenosyl-L-methionine</name>
        <dbReference type="ChEBI" id="CHEBI:59789"/>
    </ligand>
</feature>
<evidence type="ECO:0000255" key="1">
    <source>
        <dbReference type="HAMAP-Rule" id="MF_00658"/>
    </source>
</evidence>
<dbReference type="EC" id="2.1.1.177" evidence="1"/>
<dbReference type="EMBL" id="AE009949">
    <property type="protein sequence ID" value="AAL98679.1"/>
    <property type="molecule type" value="Genomic_DNA"/>
</dbReference>
<dbReference type="RefSeq" id="WP_011018348.1">
    <property type="nucleotide sequence ID" value="NC_003485.1"/>
</dbReference>
<dbReference type="SMR" id="Q8NYY7"/>
<dbReference type="KEGG" id="spm:spyM18_2255"/>
<dbReference type="HOGENOM" id="CLU_100552_0_0_9"/>
<dbReference type="GO" id="GO:0005737">
    <property type="term" value="C:cytoplasm"/>
    <property type="evidence" value="ECO:0007669"/>
    <property type="project" value="UniProtKB-SubCell"/>
</dbReference>
<dbReference type="GO" id="GO:0070038">
    <property type="term" value="F:rRNA (pseudouridine-N3-)-methyltransferase activity"/>
    <property type="evidence" value="ECO:0007669"/>
    <property type="project" value="UniProtKB-UniRule"/>
</dbReference>
<dbReference type="CDD" id="cd18081">
    <property type="entry name" value="RlmH-like"/>
    <property type="match status" value="1"/>
</dbReference>
<dbReference type="Gene3D" id="3.40.1280.10">
    <property type="match status" value="1"/>
</dbReference>
<dbReference type="HAMAP" id="MF_00658">
    <property type="entry name" value="23SrRNA_methyltr_H"/>
    <property type="match status" value="1"/>
</dbReference>
<dbReference type="InterPro" id="IPR029028">
    <property type="entry name" value="Alpha/beta_knot_MTases"/>
</dbReference>
<dbReference type="InterPro" id="IPR003742">
    <property type="entry name" value="RlmH-like"/>
</dbReference>
<dbReference type="InterPro" id="IPR029026">
    <property type="entry name" value="tRNA_m1G_MTases_N"/>
</dbReference>
<dbReference type="NCBIfam" id="NF000985">
    <property type="entry name" value="PRK00103.1-3"/>
    <property type="match status" value="1"/>
</dbReference>
<dbReference type="NCBIfam" id="TIGR00246">
    <property type="entry name" value="tRNA_RlmH_YbeA"/>
    <property type="match status" value="1"/>
</dbReference>
<dbReference type="PANTHER" id="PTHR33603">
    <property type="entry name" value="METHYLTRANSFERASE"/>
    <property type="match status" value="1"/>
</dbReference>
<dbReference type="PANTHER" id="PTHR33603:SF1">
    <property type="entry name" value="RIBOSOMAL RNA LARGE SUBUNIT METHYLTRANSFERASE H"/>
    <property type="match status" value="1"/>
</dbReference>
<dbReference type="Pfam" id="PF02590">
    <property type="entry name" value="SPOUT_MTase"/>
    <property type="match status" value="1"/>
</dbReference>
<dbReference type="PIRSF" id="PIRSF004505">
    <property type="entry name" value="MT_bac"/>
    <property type="match status" value="1"/>
</dbReference>
<dbReference type="SUPFAM" id="SSF75217">
    <property type="entry name" value="alpha/beta knot"/>
    <property type="match status" value="1"/>
</dbReference>
<gene>
    <name evidence="1" type="primary">rlmH</name>
    <name type="ordered locus">spyM18_2255</name>
</gene>
<protein>
    <recommendedName>
        <fullName evidence="1">Ribosomal RNA large subunit methyltransferase H</fullName>
        <ecNumber evidence="1">2.1.1.177</ecNumber>
    </recommendedName>
    <alternativeName>
        <fullName evidence="1">23S rRNA (pseudouridine1915-N3)-methyltransferase</fullName>
    </alternativeName>
    <alternativeName>
        <fullName evidence="1">23S rRNA m3Psi1915 methyltransferase</fullName>
    </alternativeName>
    <alternativeName>
        <fullName evidence="1">rRNA (pseudouridine-N3-)-methyltransferase RlmH</fullName>
    </alternativeName>
</protein>
<comment type="function">
    <text evidence="1">Specifically methylates the pseudouridine at position 1915 (m3Psi1915) in 23S rRNA.</text>
</comment>
<comment type="catalytic activity">
    <reaction evidence="1">
        <text>pseudouridine(1915) in 23S rRNA + S-adenosyl-L-methionine = N(3)-methylpseudouridine(1915) in 23S rRNA + S-adenosyl-L-homocysteine + H(+)</text>
        <dbReference type="Rhea" id="RHEA:42752"/>
        <dbReference type="Rhea" id="RHEA-COMP:10221"/>
        <dbReference type="Rhea" id="RHEA-COMP:10222"/>
        <dbReference type="ChEBI" id="CHEBI:15378"/>
        <dbReference type="ChEBI" id="CHEBI:57856"/>
        <dbReference type="ChEBI" id="CHEBI:59789"/>
        <dbReference type="ChEBI" id="CHEBI:65314"/>
        <dbReference type="ChEBI" id="CHEBI:74486"/>
        <dbReference type="EC" id="2.1.1.177"/>
    </reaction>
</comment>
<comment type="subunit">
    <text evidence="1">Homodimer.</text>
</comment>
<comment type="subcellular location">
    <subcellularLocation>
        <location evidence="1">Cytoplasm</location>
    </subcellularLocation>
</comment>
<comment type="similarity">
    <text evidence="1">Belongs to the RNA methyltransferase RlmH family.</text>
</comment>
<name>RLMH_STRP8</name>
<sequence>MKVKLICVGKLKERYLKDGISEYQKRLSRFCQFEMIELTDERTPDKANFADNQLIMSKEAQRIHKKIGERDFVIALAIEGKQFPSETFSELISGVTVKGYSTITFIIGGSLGLDSIIKKRADMLMSFGLLTLPHQLMRLVLTEQIYRAFMITKGSPYHK</sequence>
<reference key="1">
    <citation type="journal article" date="2002" name="Proc. Natl. Acad. Sci. U.S.A.">
        <title>Genome sequence and comparative microarray analysis of serotype M18 group A Streptococcus strains associated with acute rheumatic fever outbreaks.</title>
        <authorList>
            <person name="Smoot J.C."/>
            <person name="Barbian K.D."/>
            <person name="Van Gompel J.J."/>
            <person name="Smoot L.M."/>
            <person name="Chaussee M.S."/>
            <person name="Sylva G.L."/>
            <person name="Sturdevant D.E."/>
            <person name="Ricklefs S.M."/>
            <person name="Porcella S.F."/>
            <person name="Parkins L.D."/>
            <person name="Beres S.B."/>
            <person name="Campbell D.S."/>
            <person name="Smith T.M."/>
            <person name="Zhang Q."/>
            <person name="Kapur V."/>
            <person name="Daly J.A."/>
            <person name="Veasy L.G."/>
            <person name="Musser J.M."/>
        </authorList>
    </citation>
    <scope>NUCLEOTIDE SEQUENCE [LARGE SCALE GENOMIC DNA]</scope>
    <source>
        <strain>MGAS8232</strain>
    </source>
</reference>
<proteinExistence type="inferred from homology"/>